<keyword id="KW-0002">3D-structure</keyword>
<keyword id="KW-0963">Cytoplasm</keyword>
<keyword id="KW-0256">Endoplasmic reticulum</keyword>
<keyword id="KW-0472">Membrane</keyword>
<keyword id="KW-0597">Phosphoprotein</keyword>
<keyword id="KW-1267">Proteomics identification</keyword>
<keyword id="KW-1185">Reference proteome</keyword>
<keyword id="KW-0712">Selenocysteine</keyword>
<keyword id="KW-0812">Transmembrane</keyword>
<keyword id="KW-1133">Transmembrane helix</keyword>
<keyword id="KW-0832">Ubl conjugation</keyword>
<gene>
    <name evidence="15 17" type="primary">SELENOS</name>
    <name evidence="13" type="synonym">SELS</name>
    <name evidence="14 17" type="synonym">VIMP</name>
    <name type="ORF">AD-015</name>
    <name type="ORF">SBBI8</name>
</gene>
<dbReference type="EMBL" id="AY324824">
    <property type="protein sequence ID" value="AAP85541.1"/>
    <property type="molecule type" value="mRNA"/>
</dbReference>
<dbReference type="EMBL" id="AF157317">
    <property type="protein sequence ID" value="AAF67483.1"/>
    <property type="status" value="ALT_FRAME"/>
    <property type="molecule type" value="mRNA"/>
</dbReference>
<dbReference type="EMBL" id="AF328864">
    <property type="protein sequence ID" value="AAK15708.1"/>
    <property type="status" value="ALT_SEQ"/>
    <property type="molecule type" value="mRNA"/>
</dbReference>
<dbReference type="EMBL" id="AC023024">
    <property type="status" value="NOT_ANNOTATED_CDS"/>
    <property type="molecule type" value="Genomic_DNA"/>
</dbReference>
<dbReference type="EMBL" id="BC005840">
    <property type="protein sequence ID" value="AAH05840.2"/>
    <property type="molecule type" value="mRNA"/>
</dbReference>
<dbReference type="EMBL" id="BC107774">
    <property type="protein sequence ID" value="AAI07775.1"/>
    <property type="molecule type" value="mRNA"/>
</dbReference>
<dbReference type="CCDS" id="CCDS53979.1"/>
<dbReference type="RefSeq" id="NP_060915.2">
    <property type="nucleotide sequence ID" value="NM_018445.5"/>
</dbReference>
<dbReference type="RefSeq" id="NP_982298.2">
    <property type="nucleotide sequence ID" value="NM_203472.2"/>
</dbReference>
<dbReference type="PDB" id="2Q2F">
    <property type="method" value="X-ray"/>
    <property type="resolution" value="1.50 A"/>
    <property type="chains" value="A=52-122"/>
</dbReference>
<dbReference type="PDB" id="5KIU">
    <property type="method" value="X-ray"/>
    <property type="resolution" value="2.20 A"/>
    <property type="chains" value="A=49-122"/>
</dbReference>
<dbReference type="PDB" id="5KIY">
    <property type="method" value="X-ray"/>
    <property type="resolution" value="2.79 A"/>
    <property type="chains" value="B=49-122"/>
</dbReference>
<dbReference type="PDB" id="6DO4">
    <property type="method" value="X-ray"/>
    <property type="resolution" value="2.20 A"/>
    <property type="chains" value="C/D=182-187"/>
</dbReference>
<dbReference type="PDBsum" id="2Q2F"/>
<dbReference type="PDBsum" id="5KIU"/>
<dbReference type="PDBsum" id="5KIY"/>
<dbReference type="PDBsum" id="6DO4"/>
<dbReference type="BMRB" id="Q9BQE4"/>
<dbReference type="SMR" id="Q9BQE4"/>
<dbReference type="BioGRID" id="120934">
    <property type="interactions" value="68"/>
</dbReference>
<dbReference type="CORUM" id="Q9BQE4"/>
<dbReference type="FunCoup" id="Q9BQE4">
    <property type="interactions" value="409"/>
</dbReference>
<dbReference type="IntAct" id="Q9BQE4">
    <property type="interactions" value="27"/>
</dbReference>
<dbReference type="MINT" id="Q9BQE4"/>
<dbReference type="STRING" id="9606.ENSP00000381282"/>
<dbReference type="GlyGen" id="Q9BQE4">
    <property type="glycosylation" value="1 site, 1 O-linked glycan (1 site)"/>
</dbReference>
<dbReference type="iPTMnet" id="Q9BQE4"/>
<dbReference type="PhosphoSitePlus" id="Q9BQE4"/>
<dbReference type="BioMuta" id="SELENOS"/>
<dbReference type="DMDM" id="172045769"/>
<dbReference type="jPOST" id="Q9BQE4"/>
<dbReference type="MassIVE" id="Q9BQE4"/>
<dbReference type="PaxDb" id="9606-ENSP00000381282"/>
<dbReference type="PeptideAtlas" id="Q9BQE4"/>
<dbReference type="ProteomicsDB" id="78662"/>
<dbReference type="Pumba" id="Q9BQE4"/>
<dbReference type="Antibodypedia" id="2437">
    <property type="antibodies" value="144 antibodies from 25 providers"/>
</dbReference>
<dbReference type="DNASU" id="55829"/>
<dbReference type="Ensembl" id="ENST00000398226.8">
    <property type="protein sequence ID" value="ENSP00000381282.3"/>
    <property type="gene ID" value="ENSG00000131871.16"/>
</dbReference>
<dbReference type="Ensembl" id="ENST00000526049.6">
    <property type="protein sequence ID" value="ENSP00000433541.1"/>
    <property type="gene ID" value="ENSG00000131871.16"/>
</dbReference>
<dbReference type="GeneID" id="55829"/>
<dbReference type="KEGG" id="hsa:55829"/>
<dbReference type="MANE-Select" id="ENST00000526049.6">
    <property type="protein sequence ID" value="ENSP00000433541.1"/>
    <property type="RefSeq nucleotide sequence ID" value="NM_018445.6"/>
    <property type="RefSeq protein sequence ID" value="NP_060915.2"/>
</dbReference>
<dbReference type="UCSC" id="uc021sxv.3">
    <property type="organism name" value="human"/>
</dbReference>
<dbReference type="AGR" id="HGNC:30396"/>
<dbReference type="CTD" id="55829"/>
<dbReference type="DisGeNET" id="55829"/>
<dbReference type="GeneCards" id="SELENOS"/>
<dbReference type="HGNC" id="HGNC:30396">
    <property type="gene designation" value="SELENOS"/>
</dbReference>
<dbReference type="HPA" id="ENSG00000131871">
    <property type="expression patterns" value="Low tissue specificity"/>
</dbReference>
<dbReference type="MIM" id="607918">
    <property type="type" value="gene"/>
</dbReference>
<dbReference type="neXtProt" id="NX_Q9BQE4"/>
<dbReference type="OpenTargets" id="ENSG00000131871"/>
<dbReference type="VEuPathDB" id="HostDB:ENSG00000131871"/>
<dbReference type="eggNOG" id="ENOG502RXYU">
    <property type="taxonomic scope" value="Eukaryota"/>
</dbReference>
<dbReference type="GeneTree" id="ENSGT00390000015688"/>
<dbReference type="InParanoid" id="Q9BQE4"/>
<dbReference type="OMA" id="KIAMWEN"/>
<dbReference type="OrthoDB" id="75792at2759"/>
<dbReference type="PAN-GO" id="Q9BQE4">
    <property type="GO annotations" value="6 GO annotations based on evolutionary models"/>
</dbReference>
<dbReference type="PhylomeDB" id="Q9BQE4"/>
<dbReference type="TreeFam" id="TF329454"/>
<dbReference type="PathwayCommons" id="Q9BQE4"/>
<dbReference type="Reactome" id="R-HSA-8866654">
    <property type="pathway name" value="E3 ubiquitin ligases ubiquitinate target proteins"/>
</dbReference>
<dbReference type="SignaLink" id="Q9BQE4"/>
<dbReference type="SIGNOR" id="Q9BQE4"/>
<dbReference type="BioGRID-ORCS" id="55829">
    <property type="hits" value="14 hits in 1164 CRISPR screens"/>
</dbReference>
<dbReference type="ChiTaRS" id="SELENOS">
    <property type="organism name" value="human"/>
</dbReference>
<dbReference type="GeneWiki" id="SELS_(gene)"/>
<dbReference type="GenomeRNAi" id="55829"/>
<dbReference type="Pharos" id="Q9BQE4">
    <property type="development level" value="Tbio"/>
</dbReference>
<dbReference type="PRO" id="PR:Q9BQE4"/>
<dbReference type="Proteomes" id="UP000005640">
    <property type="component" value="Chromosome 15"/>
</dbReference>
<dbReference type="RNAct" id="Q9BQE4">
    <property type="molecule type" value="protein"/>
</dbReference>
<dbReference type="Bgee" id="ENSG00000131871">
    <property type="expression patterns" value="Expressed in ileal mucosa and 182 other cell types or tissues"/>
</dbReference>
<dbReference type="ExpressionAtlas" id="Q9BQE4">
    <property type="expression patterns" value="baseline and differential"/>
</dbReference>
<dbReference type="GO" id="GO:0005881">
    <property type="term" value="C:cytoplasmic microtubule"/>
    <property type="evidence" value="ECO:0000314"/>
    <property type="project" value="UniProtKB"/>
</dbReference>
<dbReference type="GO" id="GO:0036513">
    <property type="term" value="C:Derlin-1 retrotranslocation complex"/>
    <property type="evidence" value="ECO:0000314"/>
    <property type="project" value="ParkinsonsUK-UCL"/>
</dbReference>
<dbReference type="GO" id="GO:0036502">
    <property type="term" value="C:Derlin-1-VIMP complex"/>
    <property type="evidence" value="ECO:0000314"/>
    <property type="project" value="ParkinsonsUK-UCL"/>
</dbReference>
<dbReference type="GO" id="GO:0005783">
    <property type="term" value="C:endoplasmic reticulum"/>
    <property type="evidence" value="ECO:0000314"/>
    <property type="project" value="HPA"/>
</dbReference>
<dbReference type="GO" id="GO:0005789">
    <property type="term" value="C:endoplasmic reticulum membrane"/>
    <property type="evidence" value="ECO:0000314"/>
    <property type="project" value="UniProtKB"/>
</dbReference>
<dbReference type="GO" id="GO:0034362">
    <property type="term" value="C:low-density lipoprotein particle"/>
    <property type="evidence" value="ECO:0000314"/>
    <property type="project" value="BHF-UCL"/>
</dbReference>
<dbReference type="GO" id="GO:0005886">
    <property type="term" value="C:plasma membrane"/>
    <property type="evidence" value="ECO:0000304"/>
    <property type="project" value="BHF-UCL"/>
</dbReference>
<dbReference type="GO" id="GO:0034361">
    <property type="term" value="C:very-low-density lipoprotein particle"/>
    <property type="evidence" value="ECO:0000314"/>
    <property type="project" value="BHF-UCL"/>
</dbReference>
<dbReference type="GO" id="GO:0016209">
    <property type="term" value="F:antioxidant activity"/>
    <property type="evidence" value="ECO:0000314"/>
    <property type="project" value="UniProtKB"/>
</dbReference>
<dbReference type="GO" id="GO:0051117">
    <property type="term" value="F:ATPase binding"/>
    <property type="evidence" value="ECO:0000353"/>
    <property type="project" value="ParkinsonsUK-UCL"/>
</dbReference>
<dbReference type="GO" id="GO:0019899">
    <property type="term" value="F:enzyme binding"/>
    <property type="evidence" value="ECO:0000353"/>
    <property type="project" value="UniProtKB"/>
</dbReference>
<dbReference type="GO" id="GO:0038023">
    <property type="term" value="F:signaling receptor activity"/>
    <property type="evidence" value="ECO:0000303"/>
    <property type="project" value="UniProtKB"/>
</dbReference>
<dbReference type="GO" id="GO:1990381">
    <property type="term" value="F:ubiquitin-specific protease binding"/>
    <property type="evidence" value="ECO:0000353"/>
    <property type="project" value="ParkinsonsUK-UCL"/>
</dbReference>
<dbReference type="GO" id="GO:0045454">
    <property type="term" value="P:cell redox homeostasis"/>
    <property type="evidence" value="ECO:0000314"/>
    <property type="project" value="UniProtKB"/>
</dbReference>
<dbReference type="GO" id="GO:0032869">
    <property type="term" value="P:cellular response to insulin stimulus"/>
    <property type="evidence" value="ECO:0000304"/>
    <property type="project" value="BHF-UCL"/>
</dbReference>
<dbReference type="GO" id="GO:0071222">
    <property type="term" value="P:cellular response to lipopolysaccharide"/>
    <property type="evidence" value="ECO:0000315"/>
    <property type="project" value="BHF-UCL"/>
</dbReference>
<dbReference type="GO" id="GO:0034599">
    <property type="term" value="P:cellular response to oxidative stress"/>
    <property type="evidence" value="ECO:0000315"/>
    <property type="project" value="BHF-UCL"/>
</dbReference>
<dbReference type="GO" id="GO:0030968">
    <property type="term" value="P:endoplasmic reticulum unfolded protein response"/>
    <property type="evidence" value="ECO:0000314"/>
    <property type="project" value="UniProtKB"/>
</dbReference>
<dbReference type="GO" id="GO:0006983">
    <property type="term" value="P:ER overload response"/>
    <property type="evidence" value="ECO:0000314"/>
    <property type="project" value="BHF-UCL"/>
</dbReference>
<dbReference type="GO" id="GO:0036503">
    <property type="term" value="P:ERAD pathway"/>
    <property type="evidence" value="ECO:0000314"/>
    <property type="project" value="UniProtKB"/>
</dbReference>
<dbReference type="GO" id="GO:0045184">
    <property type="term" value="P:establishment of protein localization"/>
    <property type="evidence" value="ECO:0000304"/>
    <property type="project" value="UniProtKB"/>
</dbReference>
<dbReference type="GO" id="GO:0002865">
    <property type="term" value="P:negative regulation of acute inflammatory response to antigenic stimulus"/>
    <property type="evidence" value="ECO:0000315"/>
    <property type="project" value="BHF-UCL"/>
</dbReference>
<dbReference type="GO" id="GO:0046325">
    <property type="term" value="P:negative regulation of D-glucose import"/>
    <property type="evidence" value="ECO:0000304"/>
    <property type="project" value="BHF-UCL"/>
</dbReference>
<dbReference type="GO" id="GO:1902236">
    <property type="term" value="P:negative regulation of endoplasmic reticulum stress-induced intrinsic apoptotic signaling pathway"/>
    <property type="evidence" value="ECO:0000315"/>
    <property type="project" value="BHF-UCL"/>
</dbReference>
<dbReference type="GO" id="GO:0045719">
    <property type="term" value="P:negative regulation of glycogen biosynthetic process"/>
    <property type="evidence" value="ECO:0000304"/>
    <property type="project" value="BHF-UCL"/>
</dbReference>
<dbReference type="GO" id="GO:0050728">
    <property type="term" value="P:negative regulation of inflammatory response"/>
    <property type="evidence" value="ECO:0000305"/>
    <property type="project" value="BHF-UCL"/>
</dbReference>
<dbReference type="GO" id="GO:0032715">
    <property type="term" value="P:negative regulation of interleukin-6 production"/>
    <property type="evidence" value="ECO:0000250"/>
    <property type="project" value="BHF-UCL"/>
</dbReference>
<dbReference type="GO" id="GO:2000110">
    <property type="term" value="P:negative regulation of macrophage apoptotic process"/>
    <property type="evidence" value="ECO:0000315"/>
    <property type="project" value="BHF-UCL"/>
</dbReference>
<dbReference type="GO" id="GO:0032720">
    <property type="term" value="P:negative regulation of tumor necrosis factor production"/>
    <property type="evidence" value="ECO:0000250"/>
    <property type="project" value="BHF-UCL"/>
</dbReference>
<dbReference type="GO" id="GO:0006111">
    <property type="term" value="P:regulation of gluconeogenesis"/>
    <property type="evidence" value="ECO:0000304"/>
    <property type="project" value="BHF-UCL"/>
</dbReference>
<dbReference type="GO" id="GO:0080164">
    <property type="term" value="P:regulation of nitric oxide metabolic process"/>
    <property type="evidence" value="ECO:0000315"/>
    <property type="project" value="BHF-UCL"/>
</dbReference>
<dbReference type="GO" id="GO:0009749">
    <property type="term" value="P:response to glucose"/>
    <property type="evidence" value="ECO:0000270"/>
    <property type="project" value="UniProtKB"/>
</dbReference>
<dbReference type="GO" id="GO:0051775">
    <property type="term" value="P:response to redox state"/>
    <property type="evidence" value="ECO:0000314"/>
    <property type="project" value="UniProtKB"/>
</dbReference>
<dbReference type="GO" id="GO:0030970">
    <property type="term" value="P:retrograde protein transport, ER to cytosol"/>
    <property type="evidence" value="ECO:0000314"/>
    <property type="project" value="UniProtKB"/>
</dbReference>
<dbReference type="Gene3D" id="6.10.250.2950">
    <property type="match status" value="1"/>
</dbReference>
<dbReference type="InterPro" id="IPR009703">
    <property type="entry name" value="Selenoprotein_S"/>
</dbReference>
<dbReference type="PANTHER" id="PTHR28621">
    <property type="entry name" value="SELENOPROTEIN S"/>
    <property type="match status" value="1"/>
</dbReference>
<dbReference type="PANTHER" id="PTHR28621:SF1">
    <property type="entry name" value="SELENOPROTEIN S"/>
    <property type="match status" value="1"/>
</dbReference>
<dbReference type="Pfam" id="PF06936">
    <property type="entry name" value="Selenoprotein_S"/>
    <property type="match status" value="1"/>
</dbReference>
<organism>
    <name type="scientific">Homo sapiens</name>
    <name type="common">Human</name>
    <dbReference type="NCBI Taxonomy" id="9606"/>
    <lineage>
        <taxon>Eukaryota</taxon>
        <taxon>Metazoa</taxon>
        <taxon>Chordata</taxon>
        <taxon>Craniata</taxon>
        <taxon>Vertebrata</taxon>
        <taxon>Euteleostomi</taxon>
        <taxon>Mammalia</taxon>
        <taxon>Eutheria</taxon>
        <taxon>Euarchontoglires</taxon>
        <taxon>Primates</taxon>
        <taxon>Haplorrhini</taxon>
        <taxon>Catarrhini</taxon>
        <taxon>Hominidae</taxon>
        <taxon>Homo</taxon>
    </lineage>
</organism>
<accession>Q9BQE4</accession>
<accession>Q3B771</accession>
<accession>Q9P0I6</accession>
<evidence type="ECO:0000250" key="1"/>
<evidence type="ECO:0000250" key="2">
    <source>
        <dbReference type="UniProtKB" id="Q9BCZ4"/>
    </source>
</evidence>
<evidence type="ECO:0000255" key="3"/>
<evidence type="ECO:0000256" key="4">
    <source>
        <dbReference type="SAM" id="MobiDB-lite"/>
    </source>
</evidence>
<evidence type="ECO:0000269" key="5">
    <source>
    </source>
</evidence>
<evidence type="ECO:0000269" key="6">
    <source>
    </source>
</evidence>
<evidence type="ECO:0000269" key="7">
    <source>
    </source>
</evidence>
<evidence type="ECO:0000269" key="8">
    <source>
    </source>
</evidence>
<evidence type="ECO:0000269" key="9">
    <source>
    </source>
</evidence>
<evidence type="ECO:0000269" key="10">
    <source>
    </source>
</evidence>
<evidence type="ECO:0000269" key="11">
    <source>
    </source>
</evidence>
<evidence type="ECO:0000269" key="12">
    <source>
    </source>
</evidence>
<evidence type="ECO:0000303" key="13">
    <source>
    </source>
</evidence>
<evidence type="ECO:0000303" key="14">
    <source>
    </source>
</evidence>
<evidence type="ECO:0000303" key="15">
    <source>
    </source>
</evidence>
<evidence type="ECO:0000305" key="16"/>
<evidence type="ECO:0000312" key="17">
    <source>
        <dbReference type="HGNC" id="HGNC:30396"/>
    </source>
</evidence>
<evidence type="ECO:0007744" key="18">
    <source>
        <dbReference type="PDB" id="6DO4"/>
    </source>
</evidence>
<evidence type="ECO:0007744" key="19">
    <source>
    </source>
</evidence>
<evidence type="ECO:0007744" key="20">
    <source>
    </source>
</evidence>
<evidence type="ECO:0007829" key="21">
    <source>
        <dbReference type="PDB" id="2Q2F"/>
    </source>
</evidence>
<evidence type="ECO:0007829" key="22">
    <source>
        <dbReference type="PDB" id="6DO4"/>
    </source>
</evidence>
<reference key="1">
    <citation type="journal article" date="2003" name="Science">
        <title>Characterization of mammalian selenoproteomes.</title>
        <authorList>
            <person name="Kryukov G.V."/>
            <person name="Castellano S."/>
            <person name="Novoselov S.V."/>
            <person name="Lobanov A.V."/>
            <person name="Zehtab O."/>
            <person name="Guigo R."/>
            <person name="Gladyshev V.N."/>
        </authorList>
    </citation>
    <scope>NUCLEOTIDE SEQUENCE [MRNA]</scope>
    <scope>SUBCELLULAR LOCATION</scope>
</reference>
<reference key="2">
    <citation type="journal article" date="2000" name="Proc. Natl. Acad. Sci. U.S.A.">
        <title>Gene expression profiling in the human hypothalamus-pituitary-adrenal axis and full-length cDNA cloning.</title>
        <authorList>
            <person name="Hu R.-M."/>
            <person name="Han Z.-G."/>
            <person name="Song H.-D."/>
            <person name="Peng Y.-D."/>
            <person name="Huang Q.-H."/>
            <person name="Ren S.-X."/>
            <person name="Gu Y.-J."/>
            <person name="Huang C.-H."/>
            <person name="Li Y.-B."/>
            <person name="Jiang C.-L."/>
            <person name="Fu G."/>
            <person name="Zhang Q.-H."/>
            <person name="Gu B.-W."/>
            <person name="Dai M."/>
            <person name="Mao Y.-F."/>
            <person name="Gao G.-F."/>
            <person name="Rong R."/>
            <person name="Ye M."/>
            <person name="Zhou J."/>
            <person name="Xu S.-H."/>
            <person name="Gu J."/>
            <person name="Shi J.-X."/>
            <person name="Jin W.-R."/>
            <person name="Zhang C.-K."/>
            <person name="Wu T.-M."/>
            <person name="Huang G.-Y."/>
            <person name="Chen Z."/>
            <person name="Chen M.-D."/>
            <person name="Chen J.-L."/>
        </authorList>
    </citation>
    <scope>NUCLEOTIDE SEQUENCE [LARGE SCALE MRNA]</scope>
    <source>
        <tissue>Adrenal gland</tissue>
    </source>
</reference>
<reference key="3">
    <citation type="submission" date="2000-12" db="EMBL/GenBank/DDBJ databases">
        <authorList>
            <person name="Li N."/>
            <person name="Wan T."/>
            <person name="Zhang W."/>
            <person name="Cao X."/>
        </authorList>
    </citation>
    <scope>NUCLEOTIDE SEQUENCE [LARGE SCALE MRNA]</scope>
</reference>
<reference key="4">
    <citation type="journal article" date="2004" name="Genome Res.">
        <title>The status, quality, and expansion of the NIH full-length cDNA project: the Mammalian Gene Collection (MGC).</title>
        <authorList>
            <consortium name="The MGC Project Team"/>
        </authorList>
    </citation>
    <scope>NUCLEOTIDE SEQUENCE [LARGE SCALE MRNA]</scope>
    <source>
        <tissue>Skin</tissue>
    </source>
</reference>
<reference key="5">
    <citation type="journal article" date="2006" name="Nature">
        <title>Analysis of the DNA sequence and duplication history of human chromosome 15.</title>
        <authorList>
            <person name="Zody M.C."/>
            <person name="Garber M."/>
            <person name="Sharpe T."/>
            <person name="Young S.K."/>
            <person name="Rowen L."/>
            <person name="O'Neill K."/>
            <person name="Whittaker C.A."/>
            <person name="Kamal M."/>
            <person name="Chang J.L."/>
            <person name="Cuomo C.A."/>
            <person name="Dewar K."/>
            <person name="FitzGerald M.G."/>
            <person name="Kodira C.D."/>
            <person name="Madan A."/>
            <person name="Qin S."/>
            <person name="Yang X."/>
            <person name="Abbasi N."/>
            <person name="Abouelleil A."/>
            <person name="Arachchi H.M."/>
            <person name="Baradarani L."/>
            <person name="Birditt B."/>
            <person name="Bloom S."/>
            <person name="Bloom T."/>
            <person name="Borowsky M.L."/>
            <person name="Burke J."/>
            <person name="Butler J."/>
            <person name="Cook A."/>
            <person name="DeArellano K."/>
            <person name="DeCaprio D."/>
            <person name="Dorris L. III"/>
            <person name="Dors M."/>
            <person name="Eichler E.E."/>
            <person name="Engels R."/>
            <person name="Fahey J."/>
            <person name="Fleetwood P."/>
            <person name="Friedman C."/>
            <person name="Gearin G."/>
            <person name="Hall J.L."/>
            <person name="Hensley G."/>
            <person name="Johnson E."/>
            <person name="Jones C."/>
            <person name="Kamat A."/>
            <person name="Kaur A."/>
            <person name="Locke D.P."/>
            <person name="Madan A."/>
            <person name="Munson G."/>
            <person name="Jaffe D.B."/>
            <person name="Lui A."/>
            <person name="Macdonald P."/>
            <person name="Mauceli E."/>
            <person name="Naylor J.W."/>
            <person name="Nesbitt R."/>
            <person name="Nicol R."/>
            <person name="O'Leary S.B."/>
            <person name="Ratcliffe A."/>
            <person name="Rounsley S."/>
            <person name="She X."/>
            <person name="Sneddon K.M.B."/>
            <person name="Stewart S."/>
            <person name="Sougnez C."/>
            <person name="Stone S.M."/>
            <person name="Topham K."/>
            <person name="Vincent D."/>
            <person name="Wang S."/>
            <person name="Zimmer A.R."/>
            <person name="Birren B.W."/>
            <person name="Hood L."/>
            <person name="Lander E.S."/>
            <person name="Nusbaum C."/>
        </authorList>
    </citation>
    <scope>NUCLEOTIDE SEQUENCE [LARGE SCALE GENOMIC DNA]</scope>
</reference>
<reference key="6">
    <citation type="journal article" date="2004" name="Nature">
        <title>A membrane protein complex mediates retro-translocation from the ER lumen into the cytosol.</title>
        <authorList>
            <person name="Ye Y."/>
            <person name="Shibata Y."/>
            <person name="Yun C."/>
            <person name="Ron D."/>
            <person name="Rapoport T.A."/>
        </authorList>
    </citation>
    <scope>IDENTIFICATION BY MASS SPECTROMETRY</scope>
    <scope>FUNCTION</scope>
    <scope>SUBCELLULAR LOCATION</scope>
    <scope>INTERACTION WITH VCP AND DERL1</scope>
</reference>
<reference key="7">
    <citation type="journal article" date="2005" name="Proc. Natl. Acad. Sci. U.S.A.">
        <title>Recruitment of the p97 ATPase and ubiquitin ligases to the site of retrotranslocation at the endoplasmic reticulum membrane.</title>
        <authorList>
            <person name="Ye Y."/>
            <person name="Shibata Y."/>
            <person name="Kikkert M."/>
            <person name="van Voorden S."/>
            <person name="Wiertz E."/>
            <person name="Rapoport T.A."/>
        </authorList>
    </citation>
    <scope>INTERACTION WITH DERL1</scope>
</reference>
<reference key="8">
    <citation type="journal article" date="2005" name="Proc. Natl. Acad. Sci. U.S.A.">
        <title>Multiprotein complexes that link dislocation, ubiquitination, and extraction of misfolded proteins from the endoplasmic reticulum membrane.</title>
        <authorList>
            <person name="Lilley B.N."/>
            <person name="Ploegh H.L."/>
        </authorList>
    </citation>
    <scope>INTERACTION WITH DERL1</scope>
</reference>
<reference key="9">
    <citation type="journal article" date="2008" name="Proc. Natl. Acad. Sci. U.S.A.">
        <title>A quantitative atlas of mitotic phosphorylation.</title>
        <authorList>
            <person name="Dephoure N."/>
            <person name="Zhou C."/>
            <person name="Villen J."/>
            <person name="Beausoleil S.A."/>
            <person name="Bakalarski C.E."/>
            <person name="Elledge S.J."/>
            <person name="Gygi S.P."/>
        </authorList>
    </citation>
    <scope>PHOSPHORYLATION [LARGE SCALE ANALYSIS] AT SER-140</scope>
    <scope>IDENTIFICATION BY MASS SPECTROMETRY [LARGE SCALE ANALYSIS]</scope>
    <source>
        <tissue>Cervix carcinoma</tissue>
    </source>
</reference>
<reference key="10">
    <citation type="journal article" date="2011" name="BMC Syst. Biol.">
        <title>Initial characterization of the human central proteome.</title>
        <authorList>
            <person name="Burkard T.R."/>
            <person name="Planyavsky M."/>
            <person name="Kaupe I."/>
            <person name="Breitwieser F.P."/>
            <person name="Buerckstuemmer T."/>
            <person name="Bennett K.L."/>
            <person name="Superti-Furga G."/>
            <person name="Colinge J."/>
        </authorList>
    </citation>
    <scope>IDENTIFICATION BY MASS SPECTROMETRY [LARGE SCALE ANALYSIS]</scope>
</reference>
<reference key="11">
    <citation type="journal article" date="2011" name="J. Biol. Chem.">
        <title>The general definition of the p97/valosin-containing protein (VCP)-interacting motif (VIM) delineates a new family of p97 cofactors.</title>
        <authorList>
            <person name="Stapf C."/>
            <person name="Cartwright E."/>
            <person name="Bycroft M."/>
            <person name="Hofmann K."/>
            <person name="Buchberger A."/>
        </authorList>
    </citation>
    <scope>INTERACTION WITH VCP</scope>
    <scope>VIM MOTIF</scope>
</reference>
<reference key="12">
    <citation type="journal article" date="2011" name="J. Biol. Chem.">
        <title>Selenoprotein K binds multiprotein complexes and is involved in the regulation of endoplasmic reticulum homeostasis.</title>
        <authorList>
            <person name="Shchedrina V.A."/>
            <person name="Everley R.A."/>
            <person name="Zhang Y."/>
            <person name="Gygi S.P."/>
            <person name="Hatfield D.L."/>
            <person name="Gladyshev V.N."/>
        </authorList>
    </citation>
    <scope>INTERACTION WITH SELENOK; DERL1; DERL2 AND DERL3</scope>
</reference>
<reference key="13">
    <citation type="journal article" date="2013" name="J. Proteome Res.">
        <title>Toward a comprehensive characterization of a human cancer cell phosphoproteome.</title>
        <authorList>
            <person name="Zhou H."/>
            <person name="Di Palma S."/>
            <person name="Preisinger C."/>
            <person name="Peng M."/>
            <person name="Polat A.N."/>
            <person name="Heck A.J."/>
            <person name="Mohammed S."/>
        </authorList>
    </citation>
    <scope>PHOSPHORYLATION [LARGE SCALE ANALYSIS] AT SER-140</scope>
    <scope>IDENTIFICATION BY MASS SPECTROMETRY [LARGE SCALE ANALYSIS]</scope>
    <source>
        <tissue>Cervix carcinoma</tissue>
    </source>
</reference>
<reference key="14">
    <citation type="journal article" date="2015" name="Proteomics">
        <title>N-terminome analysis of the human mitochondrial proteome.</title>
        <authorList>
            <person name="Vaca Jacome A.S."/>
            <person name="Rabilloud T."/>
            <person name="Schaeffer-Reiss C."/>
            <person name="Rompais M."/>
            <person name="Ayoub D."/>
            <person name="Lane L."/>
            <person name="Bairoch A."/>
            <person name="Van Dorsselaer A."/>
            <person name="Carapito C."/>
        </authorList>
    </citation>
    <scope>IDENTIFICATION BY MASS SPECTROMETRY [LARGE SCALE ANALYSIS]</scope>
</reference>
<reference key="15">
    <citation type="journal article" date="2015" name="Science">
        <title>SELENOPROTEINS. CRL2 aids elimination of truncated selenoproteins produced by failed UGA/Sec decoding.</title>
        <authorList>
            <person name="Lin H.C."/>
            <person name="Ho S.C."/>
            <person name="Chen Y.Y."/>
            <person name="Khoo K.H."/>
            <person name="Hsu P.H."/>
            <person name="Yen H.C."/>
        </authorList>
    </citation>
    <scope>UBIQUITINATION</scope>
</reference>
<reference key="16">
    <citation type="journal article" date="2016" name="J. Biol. Chem.">
        <title>Selenoprotein gene nomenclature.</title>
        <authorList>
            <person name="Gladyshev V.N."/>
            <person name="Arner E.S."/>
            <person name="Berry M.J."/>
            <person name="Brigelius-Flohe R."/>
            <person name="Bruford E.A."/>
            <person name="Burk R.F."/>
            <person name="Carlson B.A."/>
            <person name="Castellano S."/>
            <person name="Chavatte L."/>
            <person name="Conrad M."/>
            <person name="Copeland P.R."/>
            <person name="Diamond A.M."/>
            <person name="Driscoll D.M."/>
            <person name="Ferreiro A."/>
            <person name="Flohe L."/>
            <person name="Green F.R."/>
            <person name="Guigo R."/>
            <person name="Handy D.E."/>
            <person name="Hatfield D.L."/>
            <person name="Hesketh J."/>
            <person name="Hoffmann P.R."/>
            <person name="Holmgren A."/>
            <person name="Hondal R.J."/>
            <person name="Howard M.T."/>
            <person name="Huang K."/>
            <person name="Kim H.Y."/>
            <person name="Kim I.Y."/>
            <person name="Koehrle J."/>
            <person name="Krol A."/>
            <person name="Kryukov G.V."/>
            <person name="Lee B.J."/>
            <person name="Lee B.C."/>
            <person name="Lei X.G."/>
            <person name="Liu Q."/>
            <person name="Lescure A."/>
            <person name="Lobanov A.V."/>
            <person name="Loscalzo J."/>
            <person name="Maiorino M."/>
            <person name="Mariotti M."/>
            <person name="Sandeep Prabhu K."/>
            <person name="Rayman M.P."/>
            <person name="Rozovsky S."/>
            <person name="Salinas G."/>
            <person name="Schmidt E.E."/>
            <person name="Schomburg L."/>
            <person name="Schweizer U."/>
            <person name="Simonovic M."/>
            <person name="Sunde R.A."/>
            <person name="Tsuji P.A."/>
            <person name="Tweedie S."/>
            <person name="Ursini F."/>
            <person name="Whanger P.D."/>
            <person name="Zhang Y."/>
        </authorList>
    </citation>
    <scope>NOMENCLATURE</scope>
</reference>
<reference key="17">
    <citation type="journal article" date="2020" name="IScience">
        <title>Cul5-type ubiquitin ligase KLHDC1 contributes to the elimination of truncated SELENOS produced by failed UGA/Sec decoding.</title>
        <authorList>
            <person name="Okumura F."/>
            <person name="Fujiki Y."/>
            <person name="Oki N."/>
            <person name="Osaki K."/>
            <person name="Nishikimi A."/>
            <person name="Fukui Y."/>
            <person name="Nakatsukasa K."/>
            <person name="Kamura T."/>
        </authorList>
    </citation>
    <scope>UBIQUITINATION</scope>
</reference>
<reference evidence="18" key="18">
    <citation type="journal article" date="2018" name="Mol. Cell">
        <title>Recognition of the diglycine C-end degron by CRL2(KLHDC2) ubiquitin ligase.</title>
        <authorList>
            <person name="Rusnac D.V."/>
            <person name="Lin H.C."/>
            <person name="Canzani D."/>
            <person name="Tien K.X."/>
            <person name="Hinds T.R."/>
            <person name="Tsue A.F."/>
            <person name="Bush M.F."/>
            <person name="Yen H.S."/>
            <person name="Zheng N."/>
        </authorList>
    </citation>
    <scope>X-RAY CRYSTALLOGRAPHY (2.20 ANGSTROMS) OF 182-187 IN COMPLEX WITH KLHDC2</scope>
    <scope>UBIQUITINATION</scope>
</reference>
<feature type="chain" id="PRO_0000097672" description="Selenoprotein S">
    <location>
        <begin position="1"/>
        <end position="189"/>
    </location>
</feature>
<feature type="transmembrane region" description="Helical" evidence="3">
    <location>
        <begin position="28"/>
        <end position="48"/>
    </location>
</feature>
<feature type="region of interest" description="VCP/p97-interacting motif (VIM)" evidence="8">
    <location>
        <begin position="78"/>
        <end position="90"/>
    </location>
</feature>
<feature type="region of interest" description="Disordered" evidence="4">
    <location>
        <begin position="115"/>
        <end position="189"/>
    </location>
</feature>
<feature type="compositionally biased region" description="Gly residues" evidence="4">
    <location>
        <begin position="159"/>
        <end position="173"/>
    </location>
</feature>
<feature type="non-standard amino acid" description="Selenocysteine">
    <location>
        <position position="188"/>
    </location>
</feature>
<feature type="modified residue" description="Phosphoserine" evidence="19 20">
    <location>
        <position position="140"/>
    </location>
</feature>
<feature type="helix" evidence="21">
    <location>
        <begin position="53"/>
        <end position="68"/>
    </location>
</feature>
<feature type="helix" evidence="21">
    <location>
        <begin position="72"/>
        <end position="121"/>
    </location>
</feature>
<feature type="turn" evidence="22">
    <location>
        <begin position="183"/>
        <end position="186"/>
    </location>
</feature>
<comment type="function">
    <text evidence="5">Involved in the degradation process of misfolded endoplasmic reticulum (ER) luminal proteins. Participates in the transfer of misfolded proteins from the ER to the cytosol, where they are destroyed by the proteasome in a ubiquitin-dependent manner. Probably acts by serving as a linker between DERL1, which mediates the retrotranslocation of misfolded proteins into the cytosol, and the ATPase complex VCP, which mediates the translocation and ubiquitination.</text>
</comment>
<comment type="subunit">
    <text evidence="2 5 6 7 8 9">Interacts with DERL1 and (via VIM motif) with VCP, suggesting that it forms a membrane complex with DERL1 that serves as a receptor for VCP. Also interacts with DERL2, DERL3 and SELENOK. The SELENOK-SELENOS complex interacts with VCP. Interacts with CCDC47 (By similarity).</text>
</comment>
<comment type="interaction">
    <interactant intactId="EBI-398970">
        <id>Q9BQE4</id>
    </interactant>
    <interactant intactId="EBI-3936819">
        <id>Q6Q788</id>
        <label>APOA5</label>
    </interactant>
    <organismsDiffer>false</organismsDiffer>
    <experiments>3</experiments>
</comment>
<comment type="interaction">
    <interactant intactId="EBI-398970">
        <id>Q9BQE4</id>
    </interactant>
    <interactant intactId="EBI-25475871">
        <id>PRO_0000449625</id>
        <label>rep</label>
        <dbReference type="UniProtKB" id="P0DTD1"/>
    </interactant>
    <organismsDiffer>true</organismsDiffer>
    <experiments>3</experiments>
</comment>
<comment type="interaction">
    <interactant intactId="EBI-398970">
        <id>Q9BQE4</id>
    </interactant>
    <interactant intactId="EBI-80597">
        <id>Q01853</id>
        <label>Vcp</label>
    </interactant>
    <organismsDiffer>true</organismsDiffer>
    <experiments>4</experiments>
</comment>
<comment type="subcellular location">
    <subcellularLocation>
        <location>Endoplasmic reticulum membrane</location>
        <topology>Single-pass membrane protein</topology>
    </subcellularLocation>
    <subcellularLocation>
        <location evidence="1">Cytoplasm</location>
    </subcellularLocation>
</comment>
<comment type="PTM">
    <text evidence="10 11 12">Truncated SELENOS proteins produced by failed UGA/Sec decoding are ubiquitinated by the CRL2(KLHDC2) and CRL2(KLHDC3) complexes, which recognizes the glycine (Gly) at the C-terminus of truncated SELENOS proteins (PubMed:26138980, PubMed:30526872). Truncated SELENOS proteins produced by failed UGA/Sec decoding are also ubiquitinated by the CRL5(KLHDC1) complex (PubMed:32200094).</text>
</comment>
<comment type="similarity">
    <text evidence="16">Belongs to the selenoprotein S family.</text>
</comment>
<comment type="sequence caution" evidence="16">
    <conflict type="frameshift">
        <sequence resource="EMBL-CDS" id="AAF67483"/>
    </conflict>
</comment>
<comment type="sequence caution" evidence="16">
    <conflict type="erroneous termination">
        <sequence resource="EMBL-CDS" id="AAK15708"/>
    </conflict>
    <text>Truncated C-terminus.</text>
</comment>
<sequence length="189" mass="21163">MERQEESLSARPALETEGLRFLHTTVGSLLATYGWYIVFSCILLYVVFQKLSARLRALRQRQLDRAAAAVEPDVVVKRQEALAAARLKMQEELNAQVEKHKEKLKQLEEEKRRQKIEMWDSMQEGKSYKGNAKKPQEEDSPGPSTSSVLKRKSDRKPLRGGGYNPLSGEGGGACSWRPGRRGPSSGGUG</sequence>
<protein>
    <recommendedName>
        <fullName evidence="15">Selenoprotein S</fullName>
        <shortName evidence="13">SelS</shortName>
    </recommendedName>
    <alternativeName>
        <fullName evidence="14">VCP-interacting membrane protein</fullName>
    </alternativeName>
</protein>
<proteinExistence type="evidence at protein level"/>
<name>SELS_HUMAN</name>